<gene>
    <name type="primary">hikeshi</name>
</gene>
<keyword id="KW-0963">Cytoplasm</keyword>
<keyword id="KW-0539">Nucleus</keyword>
<keyword id="KW-0653">Protein transport</keyword>
<keyword id="KW-1185">Reference proteome</keyword>
<keyword id="KW-0813">Transport</keyword>
<sequence length="197" mass="22003">MFGCLVAGRLVQTDAQQVAEDKFVFNLPDYESINHVVVFMLGTVPFPERMGGSVYFSYPDQSGMPVWTLLGFITNEKPSAIFKISGLKSGEGSQHPFGTMNIPQTPSVAQIGISVELLEQMAQQTPVANAAVSTIDSFTQFTQKMLDNFYNFATSFAVSQAQMTPNPSEVFIPSNVVLKWYENFQRRMAQNPFFWKT</sequence>
<proteinExistence type="evidence at transcript level"/>
<evidence type="ECO:0000250" key="1"/>
<evidence type="ECO:0000305" key="2"/>
<dbReference type="EMBL" id="AAMC01059364">
    <property type="status" value="NOT_ANNOTATED_CDS"/>
    <property type="molecule type" value="Genomic_DNA"/>
</dbReference>
<dbReference type="EMBL" id="AAMC01059365">
    <property type="status" value="NOT_ANNOTATED_CDS"/>
    <property type="molecule type" value="Genomic_DNA"/>
</dbReference>
<dbReference type="EMBL" id="AAMC01059366">
    <property type="status" value="NOT_ANNOTATED_CDS"/>
    <property type="molecule type" value="Genomic_DNA"/>
</dbReference>
<dbReference type="EMBL" id="BC135186">
    <property type="protein sequence ID" value="AAI35187.1"/>
    <property type="molecule type" value="mRNA"/>
</dbReference>
<dbReference type="RefSeq" id="NP_001090793.1">
    <property type="nucleotide sequence ID" value="NM_001097324.1"/>
</dbReference>
<dbReference type="SMR" id="A4IGP0"/>
<dbReference type="FunCoup" id="A4IGP0">
    <property type="interactions" value="3625"/>
</dbReference>
<dbReference type="STRING" id="8364.ENSXETP00000018511"/>
<dbReference type="PaxDb" id="8364-ENSXETP00000022906"/>
<dbReference type="DNASU" id="100037885"/>
<dbReference type="GeneID" id="100037885"/>
<dbReference type="KEGG" id="xtr:100037885"/>
<dbReference type="AGR" id="Xenbase:XB-GENE-967059"/>
<dbReference type="CTD" id="51501"/>
<dbReference type="Xenbase" id="XB-GENE-967059">
    <property type="gene designation" value="hikeshi"/>
</dbReference>
<dbReference type="eggNOG" id="KOG4067">
    <property type="taxonomic scope" value="Eukaryota"/>
</dbReference>
<dbReference type="HOGENOM" id="CLU_084839_2_0_1"/>
<dbReference type="InParanoid" id="A4IGP0"/>
<dbReference type="OMA" id="WWAKFER"/>
<dbReference type="OrthoDB" id="10248398at2759"/>
<dbReference type="PhylomeDB" id="A4IGP0"/>
<dbReference type="TreeFam" id="TF313222"/>
<dbReference type="Reactome" id="R-XTR-3371453">
    <property type="pathway name" value="Regulation of HSF1-mediated heat shock response"/>
</dbReference>
<dbReference type="Proteomes" id="UP000008143">
    <property type="component" value="Chromosome 2"/>
</dbReference>
<dbReference type="Bgee" id="ENSXETG00000010439">
    <property type="expression patterns" value="Expressed in skeletal muscle tissue and 13 other cell types or tissues"/>
</dbReference>
<dbReference type="GO" id="GO:0005829">
    <property type="term" value="C:cytosol"/>
    <property type="evidence" value="ECO:0000250"/>
    <property type="project" value="UniProtKB"/>
</dbReference>
<dbReference type="GO" id="GO:0005634">
    <property type="term" value="C:nucleus"/>
    <property type="evidence" value="ECO:0000250"/>
    <property type="project" value="UniProtKB"/>
</dbReference>
<dbReference type="GO" id="GO:0030544">
    <property type="term" value="F:Hsp70 protein binding"/>
    <property type="evidence" value="ECO:0000250"/>
    <property type="project" value="UniProtKB"/>
</dbReference>
<dbReference type="GO" id="GO:0034605">
    <property type="term" value="P:cellular response to heat"/>
    <property type="evidence" value="ECO:0000250"/>
    <property type="project" value="UniProtKB"/>
</dbReference>
<dbReference type="GO" id="GO:0006606">
    <property type="term" value="P:protein import into nucleus"/>
    <property type="evidence" value="ECO:0000250"/>
    <property type="project" value="UniProtKB"/>
</dbReference>
<dbReference type="GO" id="GO:0015031">
    <property type="term" value="P:protein transport"/>
    <property type="evidence" value="ECO:0000250"/>
    <property type="project" value="UniProtKB"/>
</dbReference>
<dbReference type="InterPro" id="IPR048364">
    <property type="entry name" value="Hikeshi-like_C"/>
</dbReference>
<dbReference type="InterPro" id="IPR008493">
    <property type="entry name" value="Hikeshi-like_N"/>
</dbReference>
<dbReference type="InterPro" id="IPR031318">
    <property type="entry name" value="OPI10"/>
</dbReference>
<dbReference type="PANTHER" id="PTHR12925">
    <property type="entry name" value="HIKESHI FAMILY MEMBER"/>
    <property type="match status" value="1"/>
</dbReference>
<dbReference type="PANTHER" id="PTHR12925:SF0">
    <property type="entry name" value="PROTEIN HIKESHI"/>
    <property type="match status" value="1"/>
</dbReference>
<dbReference type="Pfam" id="PF21057">
    <property type="entry name" value="Hikeshi-like_C"/>
    <property type="match status" value="1"/>
</dbReference>
<dbReference type="Pfam" id="PF05603">
    <property type="entry name" value="Hikeshi-like_N"/>
    <property type="match status" value="1"/>
</dbReference>
<feature type="chain" id="PRO_0000417992" description="Protein Hikeshi">
    <location>
        <begin position="1"/>
        <end position="197"/>
    </location>
</feature>
<organism>
    <name type="scientific">Xenopus tropicalis</name>
    <name type="common">Western clawed frog</name>
    <name type="synonym">Silurana tropicalis</name>
    <dbReference type="NCBI Taxonomy" id="8364"/>
    <lineage>
        <taxon>Eukaryota</taxon>
        <taxon>Metazoa</taxon>
        <taxon>Chordata</taxon>
        <taxon>Craniata</taxon>
        <taxon>Vertebrata</taxon>
        <taxon>Euteleostomi</taxon>
        <taxon>Amphibia</taxon>
        <taxon>Batrachia</taxon>
        <taxon>Anura</taxon>
        <taxon>Pipoidea</taxon>
        <taxon>Pipidae</taxon>
        <taxon>Xenopodinae</taxon>
        <taxon>Xenopus</taxon>
        <taxon>Silurana</taxon>
    </lineage>
</organism>
<name>HIKES_XENTR</name>
<accession>A4IGP0</accession>
<protein>
    <recommendedName>
        <fullName>Protein Hikeshi</fullName>
    </recommendedName>
</protein>
<comment type="function">
    <text evidence="1">Acts as a specific nuclear import carrier for hsp70 proteins following heat-shock stress: acts by mediating the nucleoporin-dependent translocation of ATP-bound hsp70 proteins into the nucleus. hsp70 proteins import is required to protect cells from heat shock damages (By similarity).</text>
</comment>
<comment type="subcellular location">
    <subcellularLocation>
        <location evidence="1">Cytoplasm</location>
        <location evidence="1">Cytosol</location>
    </subcellularLocation>
    <subcellularLocation>
        <location evidence="1">Nucleus</location>
    </subcellularLocation>
</comment>
<comment type="similarity">
    <text evidence="2">Belongs to the OPI10 family.</text>
</comment>
<reference key="1">
    <citation type="journal article" date="2010" name="Science">
        <title>The genome of the Western clawed frog Xenopus tropicalis.</title>
        <authorList>
            <person name="Hellsten U."/>
            <person name="Harland R.M."/>
            <person name="Gilchrist M.J."/>
            <person name="Hendrix D."/>
            <person name="Jurka J."/>
            <person name="Kapitonov V."/>
            <person name="Ovcharenko I."/>
            <person name="Putnam N.H."/>
            <person name="Shu S."/>
            <person name="Taher L."/>
            <person name="Blitz I.L."/>
            <person name="Blumberg B."/>
            <person name="Dichmann D.S."/>
            <person name="Dubchak I."/>
            <person name="Amaya E."/>
            <person name="Detter J.C."/>
            <person name="Fletcher R."/>
            <person name="Gerhard D.S."/>
            <person name="Goodstein D."/>
            <person name="Graves T."/>
            <person name="Grigoriev I.V."/>
            <person name="Grimwood J."/>
            <person name="Kawashima T."/>
            <person name="Lindquist E."/>
            <person name="Lucas S.M."/>
            <person name="Mead P.E."/>
            <person name="Mitros T."/>
            <person name="Ogino H."/>
            <person name="Ohta Y."/>
            <person name="Poliakov A.V."/>
            <person name="Pollet N."/>
            <person name="Robert J."/>
            <person name="Salamov A."/>
            <person name="Sater A.K."/>
            <person name="Schmutz J."/>
            <person name="Terry A."/>
            <person name="Vize P.D."/>
            <person name="Warren W.C."/>
            <person name="Wells D."/>
            <person name="Wills A."/>
            <person name="Wilson R.K."/>
            <person name="Zimmerman L.B."/>
            <person name="Zorn A.M."/>
            <person name="Grainger R."/>
            <person name="Grammer T."/>
            <person name="Khokha M.K."/>
            <person name="Richardson P.M."/>
            <person name="Rokhsar D.S."/>
        </authorList>
    </citation>
    <scope>NUCLEOTIDE SEQUENCE [LARGE SCALE GENOMIC DNA]</scope>
</reference>
<reference key="2">
    <citation type="submission" date="2007-03" db="EMBL/GenBank/DDBJ databases">
        <authorList>
            <consortium name="NIH - Xenopus Gene Collection (XGC) project"/>
        </authorList>
    </citation>
    <scope>NUCLEOTIDE SEQUENCE [LARGE SCALE MRNA]</scope>
    <source>
        <tissue>Embryo</tissue>
    </source>
</reference>